<evidence type="ECO:0000250" key="1"/>
<evidence type="ECO:0000250" key="2">
    <source>
        <dbReference type="UniProtKB" id="P0C6L3"/>
    </source>
</evidence>
<evidence type="ECO:0000250" key="3">
    <source>
        <dbReference type="UniProtKB" id="P29996"/>
    </source>
</evidence>
<evidence type="ECO:0000255" key="4"/>
<evidence type="ECO:0000255" key="5">
    <source>
        <dbReference type="PROSITE-ProRule" id="PRU01183"/>
    </source>
</evidence>
<evidence type="ECO:0000256" key="6">
    <source>
        <dbReference type="SAM" id="MobiDB-lite"/>
    </source>
</evidence>
<evidence type="ECO:0000305" key="7"/>
<keyword id="KW-0007">Acetylation</keyword>
<keyword id="KW-1048">Host nucleus</keyword>
<keyword id="KW-0449">Lipoprotein</keyword>
<keyword id="KW-0488">Methylation</keyword>
<keyword id="KW-0597">Phosphoprotein</keyword>
<keyword id="KW-0636">Prenylation</keyword>
<keyword id="KW-0691">RNA editing</keyword>
<keyword id="KW-0694">RNA-binding</keyword>
<keyword id="KW-1163">Viral penetration into host nucleus</keyword>
<keyword id="KW-0946">Virion</keyword>
<keyword id="KW-1160">Virus entry into host cell</keyword>
<organismHost>
    <name type="scientific">Homo sapiens</name>
    <name type="common">Human</name>
    <dbReference type="NCBI Taxonomy" id="9606"/>
</organismHost>
<feature type="chain" id="PRO_0000038144" description="Large delta antigen">
    <location>
        <begin position="1"/>
        <end position="211"/>
    </location>
</feature>
<feature type="propeptide" id="PRO_0000396794" description="Removed in mature form" evidence="3">
    <location>
        <begin position="212"/>
        <end position="214"/>
    </location>
</feature>
<feature type="domain" description="HDAg" evidence="5">
    <location>
        <begin position="21"/>
        <end position="195"/>
    </location>
</feature>
<feature type="region of interest" description="Dimerization" evidence="4">
    <location>
        <begin position="13"/>
        <end position="60"/>
    </location>
</feature>
<feature type="region of interest" description="Disordered" evidence="6">
    <location>
        <begin position="58"/>
        <end position="214"/>
    </location>
</feature>
<feature type="region of interest" description="RNA-binding" evidence="5">
    <location>
        <begin position="97"/>
        <end position="107"/>
    </location>
</feature>
<feature type="region of interest" description="RNAPII-binding" evidence="5">
    <location>
        <begin position="130"/>
        <end position="195"/>
    </location>
</feature>
<feature type="region of interest" description="RNA-binding" evidence="5">
    <location>
        <begin position="136"/>
        <end position="146"/>
    </location>
</feature>
<feature type="short sequence motif" description="Nuclear localization signal" evidence="3">
    <location>
        <begin position="66"/>
        <end position="75"/>
    </location>
</feature>
<feature type="compositionally biased region" description="Basic and acidic residues" evidence="6">
    <location>
        <begin position="93"/>
        <end position="112"/>
    </location>
</feature>
<feature type="compositionally biased region" description="Gly residues" evidence="6">
    <location>
        <begin position="158"/>
        <end position="167"/>
    </location>
</feature>
<feature type="compositionally biased region" description="Low complexity" evidence="6">
    <location>
        <begin position="205"/>
        <end position="214"/>
    </location>
</feature>
<feature type="modified residue" description="Phosphoserine; by host" evidence="3">
    <location>
        <position position="2"/>
    </location>
</feature>
<feature type="modified residue" description="Omega-N-methylated arginine; by host" evidence="2">
    <location>
        <position position="14"/>
    </location>
</feature>
<feature type="modified residue" description="N6-acetyllysine; by host" evidence="2">
    <location>
        <position position="72"/>
    </location>
</feature>
<feature type="modified residue" description="Phosphoserine; by host" evidence="3">
    <location>
        <position position="123"/>
    </location>
</feature>
<feature type="modified residue" description="Phosphoserine; by host" evidence="3">
    <location>
        <position position="177"/>
    </location>
</feature>
<feature type="modified residue" description="Cysteine methyl ester; by host" evidence="3">
    <location>
        <position position="211"/>
    </location>
</feature>
<feature type="lipid moiety-binding region" description="S-farnesyl cysteine; by host" evidence="3">
    <location>
        <position position="211"/>
    </location>
</feature>
<sequence length="214" mass="24086">MSQSETRRGRRGTREETLEKWITARKKAEELEKDLRKTRKTIKKLEEENPWLGNIVGIIRKGKDGEGAPPAKRPRTDQMEVDSGPGKRPHKSGFTDKEREDHRRRKALENKKKQLSAGGKILSKEEEEELRRLTDEDEERKRRVAGPRVGDVNPSRGGPRGAPGGGFVPQMAGVPESPFSRTGEGLDIRGTQGFPWVSPSPPQQRLPLLECTPQ</sequence>
<dbReference type="EMBL" id="D90192">
    <property type="protein sequence ID" value="BAA14216.1"/>
    <property type="status" value="ALT_TERM"/>
    <property type="molecule type" value="Genomic_RNA"/>
</dbReference>
<dbReference type="PIR" id="B36409">
    <property type="entry name" value="SAVLDS"/>
</dbReference>
<dbReference type="SMR" id="P0C6L9"/>
<dbReference type="Proteomes" id="UP000008111">
    <property type="component" value="Genome"/>
</dbReference>
<dbReference type="GO" id="GO:0043657">
    <property type="term" value="C:host cell"/>
    <property type="evidence" value="ECO:0007669"/>
    <property type="project" value="GOC"/>
</dbReference>
<dbReference type="GO" id="GO:0044196">
    <property type="term" value="C:host cell nucleolus"/>
    <property type="evidence" value="ECO:0007669"/>
    <property type="project" value="UniProtKB-SubCell"/>
</dbReference>
<dbReference type="GO" id="GO:0044423">
    <property type="term" value="C:virion component"/>
    <property type="evidence" value="ECO:0007669"/>
    <property type="project" value="UniProtKB-KW"/>
</dbReference>
<dbReference type="GO" id="GO:0003723">
    <property type="term" value="F:RNA binding"/>
    <property type="evidence" value="ECO:0007669"/>
    <property type="project" value="UniProtKB-KW"/>
</dbReference>
<dbReference type="GO" id="GO:0046718">
    <property type="term" value="P:symbiont entry into host cell"/>
    <property type="evidence" value="ECO:0007669"/>
    <property type="project" value="UniProtKB-KW"/>
</dbReference>
<dbReference type="GO" id="GO:0075732">
    <property type="term" value="P:viral penetration into host nucleus"/>
    <property type="evidence" value="ECO:0007669"/>
    <property type="project" value="UniProtKB-KW"/>
</dbReference>
<dbReference type="Gene3D" id="4.10.220.40">
    <property type="entry name" value="Delta antigen, N-terminal"/>
    <property type="match status" value="1"/>
</dbReference>
<dbReference type="InterPro" id="IPR027403">
    <property type="entry name" value="Delta_antigen_N"/>
</dbReference>
<dbReference type="InterPro" id="IPR037517">
    <property type="entry name" value="HDAG_dom"/>
</dbReference>
<dbReference type="InterPro" id="IPR002506">
    <property type="entry name" value="HDV_ag"/>
</dbReference>
<dbReference type="Pfam" id="PF01517">
    <property type="entry name" value="HDV_ag"/>
    <property type="match status" value="1"/>
</dbReference>
<dbReference type="SUPFAM" id="SSF58108">
    <property type="entry name" value="Oligomerization domain of hepatitis delta antigen"/>
    <property type="match status" value="1"/>
</dbReference>
<dbReference type="PROSITE" id="PS51838">
    <property type="entry name" value="HDAG"/>
    <property type="match status" value="1"/>
</dbReference>
<name>LHDAG_HDVS1</name>
<accession>P0C6L9</accession>
<organism>
    <name type="scientific">Hepatitis delta virus genotype II (isolate Japanese S-1)</name>
    <name type="common">HDV</name>
    <dbReference type="NCBI Taxonomy" id="10427"/>
    <lineage>
        <taxon>Viruses</taxon>
        <taxon>Ribozyviria</taxon>
        <taxon>Kolmioviridae</taxon>
        <taxon>Deltavirus</taxon>
        <taxon>Hepatitis delta virus</taxon>
    </lineage>
</organism>
<reference key="1">
    <citation type="journal article" date="1990" name="J. Virol.">
        <title>Heterogeneity and evolution rates of delta virus RNA sequences.</title>
        <authorList>
            <person name="Imazeki F."/>
            <person name="Omata M."/>
            <person name="Ohto M."/>
        </authorList>
    </citation>
    <scope>NUCLEOTIDE SEQUENCE [GENOMIC RNA]</scope>
</reference>
<reference key="2">
    <citation type="journal article" date="2005" name="Acta Virol.">
        <title>Hepatitis D.</title>
        <authorList>
            <person name="Husa P."/>
            <person name="Linhartova A."/>
            <person name="Nemecek V."/>
            <person name="Husova L."/>
        </authorList>
    </citation>
    <scope>REVIEW</scope>
</reference>
<reference key="3">
    <citation type="journal article" date="2006" name="Curr. Top. Microbiol. Immunol.">
        <title>Post-translational modification of delta antigen of hepatitis D virus.</title>
        <authorList>
            <person name="Huang W.H."/>
            <person name="Chen C.W."/>
            <person name="Wu H.L."/>
            <person name="Chen P.J."/>
        </authorList>
    </citation>
    <scope>REVIEW</scope>
</reference>
<protein>
    <recommendedName>
        <fullName>Large delta antigen</fullName>
        <shortName>L-HDAg</shortName>
    </recommendedName>
    <alternativeName>
        <fullName>p27</fullName>
    </alternativeName>
</protein>
<comment type="function">
    <text evidence="1">Following virus entry into host cell, provides nuclear import of HDV RNPs thanks to its nuclear localization signal. Needs co-infection with hepatitis B virus to provide surface proteins, otherwise there is no packaging or budding. Packages the HDV ribonucleoprotein in hepatitis B virus empty particles. Interacts with both HDV genomic RNA and cytoplasmic tail of HBsAg. May inhibit viral RNA replication (By similarity).</text>
</comment>
<comment type="subunit">
    <text evidence="1">Homodimer. Homooctamer. Interacts with HBV HBsAg. May interact with clathrin to induce virion budding (By similarity).</text>
</comment>
<comment type="subcellular location">
    <subcellularLocation>
        <location>Virion</location>
    </subcellularLocation>
    <subcellularLocation>
        <location>Host nucleus</location>
        <location>Host nucleolus</location>
    </subcellularLocation>
    <text evidence="1">isoprenylated in the cytoplasm, and translocates in the nucleus possibly after phosphorylation. Translocates after to nuclear speckle, then to the ER membrane where interaction with Hepatitis B virus antigene takes place (By similarity).</text>
</comment>
<comment type="PTM">
    <text evidence="1">Prenylated by host farnesyl-transferase in the cytoplasm prior to nucleus translocation.</text>
</comment>
<comment type="PTM">
    <text evidence="1">Phosphorylated at serines by host CK2 and other kinases. phosphorylation does not seem to be important for its function (By similarity).</text>
</comment>
<comment type="RNA editing">
    <location>
        <position position="196" evidence="1"/>
    </location>
    <text evidence="1">Partially edited. RNA editing at this position occurs on the antigenomic strand and consists of a conversion of A to G catalyzed by the cellular enzyme ADAR1. The unedited RNA version gives rise to the small delta antigen (AC P69619), which ends with a nonsense codon at position 196. In the edited version, this amber codon is modified to a tryptophan codon and gives rise to the large delta antigen protein. S-HDAg suppresses editing of non-replicating antigenomic RNA, thereby regulating the extent of editing (By similarity).</text>
</comment>
<comment type="miscellaneous">
    <text>This strain belongs to the genotype II found only in East Asia.</text>
</comment>
<comment type="similarity">
    <text evidence="7">Belongs to the hepatitis delta antigen family.</text>
</comment>
<proteinExistence type="inferred from homology"/>